<organism>
    <name type="scientific">Escherichia phage RB69</name>
    <name type="common">Bacteriophage RB69</name>
    <dbReference type="NCBI Taxonomy" id="12353"/>
    <lineage>
        <taxon>Viruses</taxon>
        <taxon>Duplodnaviria</taxon>
        <taxon>Heunggongvirae</taxon>
        <taxon>Uroviricota</taxon>
        <taxon>Caudoviricetes</taxon>
        <taxon>Straboviridae</taxon>
        <taxon>Tevenvirinae</taxon>
        <taxon>Mosigvirus</taxon>
        <taxon>Mosigvirus RB69</taxon>
    </lineage>
</organism>
<protein>
    <recommendedName>
        <fullName evidence="1">Small outer capsid protein</fullName>
        <shortName>Soc</shortName>
    </recommendedName>
</protein>
<name>SOC_BPR69</name>
<keyword id="KW-0002">3D-structure</keyword>
<keyword id="KW-1232">Capsid decoration protein</keyword>
<keyword id="KW-0167">Capsid protein</keyword>
<keyword id="KW-1185">Reference proteome</keyword>
<keyword id="KW-0946">Virion</keyword>
<comment type="function">
    <text evidence="1">Capsid decoration protein which helps to stabilize the capsid against extremes of pH and temperature. Once maturation and expansion of the capsid has occured, trimers of soc attach the interfaces between the hexamer of the major capsid protein. Acts as a 'glue' between neighboring hexameric capsomers. Dispensable for the head morphogenesis and phage infection.</text>
</comment>
<comment type="subunit">
    <text evidence="1">Homotrimer. Interacts with the major capsid protein; three soc molecules associate with each interface between the major capsid protein facets.</text>
</comment>
<comment type="subcellular location">
    <subcellularLocation>
        <location evidence="1 2">Virion</location>
    </subcellularLocation>
    <text evidence="2">870 copies decorate the capsid.</text>
</comment>
<comment type="similarity">
    <text evidence="1">Belongs to the Tevenvirinae Soc family.</text>
</comment>
<evidence type="ECO:0000255" key="1">
    <source>
        <dbReference type="HAMAP-Rule" id="MF_04115"/>
    </source>
</evidence>
<evidence type="ECO:0000269" key="2">
    <source>
    </source>
</evidence>
<evidence type="ECO:0007744" key="3">
    <source>
        <dbReference type="PDB" id="3IG9"/>
    </source>
</evidence>
<evidence type="ECO:0007744" key="4">
    <source>
        <dbReference type="PDB" id="3IGE"/>
    </source>
</evidence>
<evidence type="ECO:0007829" key="5">
    <source>
        <dbReference type="PDB" id="3IG9"/>
    </source>
</evidence>
<accession>Q7Y5B1</accession>
<organismHost>
    <name type="scientific">Escherichia coli</name>
    <dbReference type="NCBI Taxonomy" id="562"/>
</organismHost>
<reference key="1">
    <citation type="journal article" date="2001" name="J. Bacteriol.">
        <title>Phylogeny of the major head and tail genes of the wide-ranging T4-type bacteriophages.</title>
        <authorList>
            <person name="Tetart F."/>
            <person name="Desplats C."/>
            <person name="Kutateladze M."/>
            <person name="Monod C."/>
            <person name="Ackermann H.W."/>
            <person name="Krisch H.M."/>
        </authorList>
    </citation>
    <scope>NUCLEOTIDE SEQUENCE [LARGE SCALE GENOMIC DNA]</scope>
</reference>
<reference key="2">
    <citation type="submission" date="2003-05" db="EMBL/GenBank/DDBJ databases">
        <authorList>
            <person name="Petrov V."/>
            <person name="Nolan J."/>
            <person name="Chin D."/>
            <person name="Letarov A."/>
            <person name="Krisch H.M."/>
            <person name="Karam J.D."/>
        </authorList>
    </citation>
    <scope>NUCLEOTIDE SEQUENCE [LARGE SCALE GENOMIC DNA]</scope>
</reference>
<reference evidence="3 4" key="3">
    <citation type="journal article" date="2010" name="J. Mol. Biol.">
        <title>Structure of the small outer capsid protein, Soc: a clamp for stabilizing capsids of T4-like phages.</title>
        <authorList>
            <person name="Qin L."/>
            <person name="Fokine A."/>
            <person name="O'Donnell E."/>
            <person name="Rao V.B."/>
            <person name="Rossmann M.G."/>
        </authorList>
    </citation>
    <scope>X-RAY CRYSTALLOGRAPHY (1.90 ANGSTROMS)</scope>
    <scope>SUBCELLULAR LOCATION</scope>
</reference>
<proteinExistence type="evidence at protein level"/>
<sequence length="78" mass="8554">MGGYVNIKTFTHPAGEGKEVKGMEVSVPFEIYSNEHRIADAHYQTFPSEKAAYTTVVTDAADWRTKNAAMFTPTPVSG</sequence>
<feature type="chain" id="PRO_0000442455" description="Small outer capsid protein">
    <location>
        <begin position="1"/>
        <end position="78"/>
    </location>
</feature>
<feature type="strand" evidence="5">
    <location>
        <begin position="4"/>
        <end position="9"/>
    </location>
</feature>
<feature type="strand" evidence="5">
    <location>
        <begin position="18"/>
        <end position="20"/>
    </location>
</feature>
<feature type="strand" evidence="5">
    <location>
        <begin position="24"/>
        <end position="28"/>
    </location>
</feature>
<feature type="helix" evidence="5">
    <location>
        <begin position="29"/>
        <end position="34"/>
    </location>
</feature>
<feature type="strand" evidence="5">
    <location>
        <begin position="43"/>
        <end position="50"/>
    </location>
</feature>
<feature type="strand" evidence="5">
    <location>
        <begin position="53"/>
        <end position="56"/>
    </location>
</feature>
<feature type="helix" evidence="5">
    <location>
        <begin position="60"/>
        <end position="68"/>
    </location>
</feature>
<feature type="turn" evidence="5">
    <location>
        <begin position="69"/>
        <end position="71"/>
    </location>
</feature>
<dbReference type="EMBL" id="AY303349">
    <property type="protein sequence ID" value="AAP75929.1"/>
    <property type="molecule type" value="Genomic_DNA"/>
</dbReference>
<dbReference type="RefSeq" id="NP_861717.1">
    <property type="nucleotide sequence ID" value="NC_004928.1"/>
</dbReference>
<dbReference type="PDB" id="3IG9">
    <property type="method" value="X-ray"/>
    <property type="resolution" value="1.90 A"/>
    <property type="chains" value="A/B/C/D=1-78"/>
</dbReference>
<dbReference type="PDB" id="3IGE">
    <property type="method" value="X-ray"/>
    <property type="resolution" value="2.25 A"/>
    <property type="chains" value="A/B=1-78"/>
</dbReference>
<dbReference type="PDBsum" id="3IG9"/>
<dbReference type="PDBsum" id="3IGE"/>
<dbReference type="SMR" id="Q7Y5B1"/>
<dbReference type="GeneID" id="1494143"/>
<dbReference type="KEGG" id="vg:1494143"/>
<dbReference type="OrthoDB" id="23172at10239"/>
<dbReference type="EvolutionaryTrace" id="Q7Y5B1"/>
<dbReference type="Proteomes" id="UP000000876">
    <property type="component" value="Genome"/>
</dbReference>
<dbReference type="GO" id="GO:0098021">
    <property type="term" value="C:viral capsid, decoration"/>
    <property type="evidence" value="ECO:0007669"/>
    <property type="project" value="UniProtKB-UniRule"/>
</dbReference>
<dbReference type="Gene3D" id="3.90.930.20">
    <property type="entry name" value="Small outer capsid protein Soc"/>
    <property type="match status" value="1"/>
</dbReference>
<dbReference type="HAMAP" id="MF_04115">
    <property type="entry name" value="SOC_T4"/>
    <property type="match status" value="1"/>
</dbReference>
<dbReference type="InterPro" id="IPR031743">
    <property type="entry name" value="Soc"/>
</dbReference>
<dbReference type="InterPro" id="IPR038151">
    <property type="entry name" value="Soc_sf"/>
</dbReference>
<dbReference type="Pfam" id="PF16855">
    <property type="entry name" value="Soc"/>
    <property type="match status" value="1"/>
</dbReference>